<gene>
    <name type="primary">EIF1B</name>
</gene>
<name>EIF1B_PIG</name>
<organism>
    <name type="scientific">Sus scrofa</name>
    <name type="common">Pig</name>
    <dbReference type="NCBI Taxonomy" id="9823"/>
    <lineage>
        <taxon>Eukaryota</taxon>
        <taxon>Metazoa</taxon>
        <taxon>Chordata</taxon>
        <taxon>Craniata</taxon>
        <taxon>Vertebrata</taxon>
        <taxon>Euteleostomi</taxon>
        <taxon>Mammalia</taxon>
        <taxon>Eutheria</taxon>
        <taxon>Laurasiatheria</taxon>
        <taxon>Artiodactyla</taxon>
        <taxon>Suina</taxon>
        <taxon>Suidae</taxon>
        <taxon>Sus</taxon>
    </lineage>
</organism>
<keyword id="KW-0007">Acetylation</keyword>
<keyword id="KW-0396">Initiation factor</keyword>
<keyword id="KW-0597">Phosphoprotein</keyword>
<keyword id="KW-0648">Protein biosynthesis</keyword>
<keyword id="KW-1185">Reference proteome</keyword>
<dbReference type="EMBL" id="AY550043">
    <property type="protein sequence ID" value="AAS55901.1"/>
    <property type="molecule type" value="mRNA"/>
</dbReference>
<dbReference type="RefSeq" id="NP_001001635.1">
    <property type="nucleotide sequence ID" value="NM_001001635.1"/>
</dbReference>
<dbReference type="RefSeq" id="XP_005669432.1">
    <property type="nucleotide sequence ID" value="XM_005669375.2"/>
</dbReference>
<dbReference type="RefSeq" id="XP_013836944.1">
    <property type="nucleotide sequence ID" value="XM_013981490.1"/>
</dbReference>
<dbReference type="RefSeq" id="XP_013836945.1">
    <property type="nucleotide sequence ID" value="XM_013981491.1"/>
</dbReference>
<dbReference type="SMR" id="P61220"/>
<dbReference type="FunCoup" id="P61220">
    <property type="interactions" value="2124"/>
</dbReference>
<dbReference type="STRING" id="9823.ENSSSCP00000012016"/>
<dbReference type="PaxDb" id="9823-ENSSSCP00000012016"/>
<dbReference type="PeptideAtlas" id="P61220"/>
<dbReference type="Ensembl" id="ENSSSCT00000012338.5">
    <property type="protein sequence ID" value="ENSSSCP00000012016.2"/>
    <property type="gene ID" value="ENSSSCG00000011270.5"/>
</dbReference>
<dbReference type="Ensembl" id="ENSSSCT00015051728.1">
    <property type="protein sequence ID" value="ENSSSCP00015020627.1"/>
    <property type="gene ID" value="ENSSSCG00015038868.1"/>
</dbReference>
<dbReference type="Ensembl" id="ENSSSCT00025027446.1">
    <property type="protein sequence ID" value="ENSSSCP00025011612.1"/>
    <property type="gene ID" value="ENSSSCG00025020215.1"/>
</dbReference>
<dbReference type="Ensembl" id="ENSSSCT00030024538.1">
    <property type="protein sequence ID" value="ENSSSCP00030010987.1"/>
    <property type="gene ID" value="ENSSSCG00030017749.1"/>
</dbReference>
<dbReference type="Ensembl" id="ENSSSCT00035016709.1">
    <property type="protein sequence ID" value="ENSSSCP00035005780.1"/>
    <property type="gene ID" value="ENSSSCG00035013244.1"/>
</dbReference>
<dbReference type="Ensembl" id="ENSSSCT00040013035.1">
    <property type="protein sequence ID" value="ENSSSCP00040004925.1"/>
    <property type="gene ID" value="ENSSSCG00040010066.1"/>
</dbReference>
<dbReference type="Ensembl" id="ENSSSCT00045017252.1">
    <property type="protein sequence ID" value="ENSSSCP00045011895.1"/>
    <property type="gene ID" value="ENSSSCG00045010192.1"/>
</dbReference>
<dbReference type="Ensembl" id="ENSSSCT00050048568.1">
    <property type="protein sequence ID" value="ENSSSCP00050020230.1"/>
    <property type="gene ID" value="ENSSSCG00050036116.1"/>
</dbReference>
<dbReference type="Ensembl" id="ENSSSCT00055022849.1">
    <property type="protein sequence ID" value="ENSSSCP00055018068.1"/>
    <property type="gene ID" value="ENSSSCG00055011700.1"/>
</dbReference>
<dbReference type="Ensembl" id="ENSSSCT00060052664.1">
    <property type="protein sequence ID" value="ENSSSCP00060022433.1"/>
    <property type="gene ID" value="ENSSSCG00060038938.1"/>
</dbReference>
<dbReference type="Ensembl" id="ENSSSCT00065022080.1">
    <property type="protein sequence ID" value="ENSSSCP00065008969.1"/>
    <property type="gene ID" value="ENSSSCG00065016629.1"/>
</dbReference>
<dbReference type="Ensembl" id="ENSSSCT00070021795.1">
    <property type="protein sequence ID" value="ENSSSCP00070018044.1"/>
    <property type="gene ID" value="ENSSSCG00070011200.1"/>
</dbReference>
<dbReference type="Ensembl" id="ENSSSCT00105060114">
    <property type="protein sequence ID" value="ENSSSCP00105042440"/>
    <property type="gene ID" value="ENSSSCG00105031672"/>
</dbReference>
<dbReference type="Ensembl" id="ENSSSCT00110026624">
    <property type="protein sequence ID" value="ENSSSCP00110017819"/>
    <property type="gene ID" value="ENSSSCG00110013997"/>
</dbReference>
<dbReference type="Ensembl" id="ENSSSCT00115006343">
    <property type="protein sequence ID" value="ENSSSCP00115005927"/>
    <property type="gene ID" value="ENSSSCG00115003721"/>
</dbReference>
<dbReference type="Ensembl" id="ENSSSCT00130038364">
    <property type="protein sequence ID" value="ENSSSCP00130026977"/>
    <property type="gene ID" value="ENSSSCG00130019799"/>
</dbReference>
<dbReference type="GeneID" id="414417"/>
<dbReference type="KEGG" id="ssc:414417"/>
<dbReference type="CTD" id="10289"/>
<dbReference type="VGNC" id="VGNC:87604">
    <property type="gene designation" value="EIF1B"/>
</dbReference>
<dbReference type="eggNOG" id="KOG1770">
    <property type="taxonomic scope" value="Eukaryota"/>
</dbReference>
<dbReference type="GeneTree" id="ENSGT00940000160239"/>
<dbReference type="HOGENOM" id="CLU_082805_3_0_1"/>
<dbReference type="InParanoid" id="P61220"/>
<dbReference type="OMA" id="CEFMITQ"/>
<dbReference type="OrthoDB" id="10248435at2759"/>
<dbReference type="TreeFam" id="TF314417"/>
<dbReference type="Proteomes" id="UP000008227">
    <property type="component" value="Chromosome 13"/>
</dbReference>
<dbReference type="Proteomes" id="UP000314985">
    <property type="component" value="Chromosome 13"/>
</dbReference>
<dbReference type="Proteomes" id="UP000694570">
    <property type="component" value="Unplaced"/>
</dbReference>
<dbReference type="Proteomes" id="UP000694571">
    <property type="component" value="Unplaced"/>
</dbReference>
<dbReference type="Proteomes" id="UP000694720">
    <property type="component" value="Unplaced"/>
</dbReference>
<dbReference type="Proteomes" id="UP000694722">
    <property type="component" value="Unplaced"/>
</dbReference>
<dbReference type="Proteomes" id="UP000694723">
    <property type="component" value="Unplaced"/>
</dbReference>
<dbReference type="Proteomes" id="UP000694724">
    <property type="component" value="Unplaced"/>
</dbReference>
<dbReference type="Proteomes" id="UP000694725">
    <property type="component" value="Unplaced"/>
</dbReference>
<dbReference type="Proteomes" id="UP000694726">
    <property type="component" value="Unplaced"/>
</dbReference>
<dbReference type="Proteomes" id="UP000694727">
    <property type="component" value="Unplaced"/>
</dbReference>
<dbReference type="Proteomes" id="UP000694728">
    <property type="component" value="Unplaced"/>
</dbReference>
<dbReference type="Bgee" id="ENSSSCG00000011270">
    <property type="expression patterns" value="Expressed in Ammon's horn and 44 other cell types or tissues"/>
</dbReference>
<dbReference type="ExpressionAtlas" id="P61220">
    <property type="expression patterns" value="baseline and differential"/>
</dbReference>
<dbReference type="GO" id="GO:0016282">
    <property type="term" value="C:eukaryotic 43S preinitiation complex"/>
    <property type="evidence" value="ECO:0000318"/>
    <property type="project" value="GO_Central"/>
</dbReference>
<dbReference type="GO" id="GO:0043024">
    <property type="term" value="F:ribosomal small subunit binding"/>
    <property type="evidence" value="ECO:0000318"/>
    <property type="project" value="GO_Central"/>
</dbReference>
<dbReference type="GO" id="GO:0003723">
    <property type="term" value="F:RNA binding"/>
    <property type="evidence" value="ECO:0000318"/>
    <property type="project" value="GO_Central"/>
</dbReference>
<dbReference type="GO" id="GO:0003743">
    <property type="term" value="F:translation initiation factor activity"/>
    <property type="evidence" value="ECO:0000318"/>
    <property type="project" value="GO_Central"/>
</dbReference>
<dbReference type="CDD" id="cd11566">
    <property type="entry name" value="eIF1_SUI1"/>
    <property type="match status" value="1"/>
</dbReference>
<dbReference type="FunFam" id="3.30.780.10:FF:000003">
    <property type="entry name" value="Eukaryotic translation initiation factor 1b"/>
    <property type="match status" value="1"/>
</dbReference>
<dbReference type="Gene3D" id="3.30.780.10">
    <property type="entry name" value="SUI1-like domain"/>
    <property type="match status" value="1"/>
</dbReference>
<dbReference type="InterPro" id="IPR001950">
    <property type="entry name" value="SUI1"/>
</dbReference>
<dbReference type="InterPro" id="IPR036877">
    <property type="entry name" value="SUI1_dom_sf"/>
</dbReference>
<dbReference type="InterPro" id="IPR005874">
    <property type="entry name" value="SUI1_euk"/>
</dbReference>
<dbReference type="NCBIfam" id="TIGR01160">
    <property type="entry name" value="SUI1_MOF2"/>
    <property type="match status" value="1"/>
</dbReference>
<dbReference type="PANTHER" id="PTHR10388">
    <property type="entry name" value="EUKARYOTIC TRANSLATION INITIATION FACTOR SUI1"/>
    <property type="match status" value="1"/>
</dbReference>
<dbReference type="Pfam" id="PF01253">
    <property type="entry name" value="SUI1"/>
    <property type="match status" value="1"/>
</dbReference>
<dbReference type="PIRSF" id="PIRSF004499">
    <property type="entry name" value="SUI1_euk"/>
    <property type="match status" value="1"/>
</dbReference>
<dbReference type="SUPFAM" id="SSF55159">
    <property type="entry name" value="eIF1-like"/>
    <property type="match status" value="1"/>
</dbReference>
<dbReference type="PROSITE" id="PS50296">
    <property type="entry name" value="SUI1"/>
    <property type="match status" value="1"/>
</dbReference>
<feature type="initiator methionine" description="Removed" evidence="1">
    <location>
        <position position="1"/>
    </location>
</feature>
<feature type="chain" id="PRO_0000130561" description="Eukaryotic translation initiation factor 1b">
    <location>
        <begin position="2"/>
        <end position="113"/>
    </location>
</feature>
<feature type="modified residue" description="N-acetylserine" evidence="1">
    <location>
        <position position="2"/>
    </location>
</feature>
<feature type="modified residue" description="Phosphoserine" evidence="1">
    <location>
        <position position="9"/>
    </location>
</feature>
<accession>P61220</accession>
<evidence type="ECO:0000250" key="1">
    <source>
        <dbReference type="UniProtKB" id="O60739"/>
    </source>
</evidence>
<evidence type="ECO:0000305" key="2"/>
<reference key="1">
    <citation type="submission" date="2004-02" db="EMBL/GenBank/DDBJ databases">
        <title>Identification of differentially expressed genes in porcine embryos.</title>
        <authorList>
            <person name="Lee H.Y."/>
            <person name="Cui X.S."/>
            <person name="Jeong Y.J."/>
            <person name="Shin M.L."/>
            <person name="Hwang K.C."/>
            <person name="Kim N.H."/>
        </authorList>
    </citation>
    <scope>NUCLEOTIDE SEQUENCE [MRNA]</scope>
</reference>
<proteinExistence type="inferred from homology"/>
<comment type="function">
    <text>Probably involved in translation.</text>
</comment>
<comment type="similarity">
    <text evidence="2">Belongs to the SUI1 family.</text>
</comment>
<protein>
    <recommendedName>
        <fullName>Eukaryotic translation initiation factor 1b</fullName>
        <shortName>eIF1b</shortName>
    </recommendedName>
    <alternativeName>
        <fullName>Protein translation factor SUI1 homolog GC20</fullName>
    </alternativeName>
</protein>
<sequence length="113" mass="12824">MSTIQNLQSFDPFADATKGDDLLPAGTEDYIHIRIQQRNGRKTLTTVQGIADDYDKKKLVKAFKKKFACNGTVIEHPEYGEVIQLQGDQRKNICQFLLEVGIVKEEQLKVHGF</sequence>